<feature type="chain" id="PRO_0000174911" description="Co-chaperonin GroES">
    <location>
        <begin position="1"/>
        <end position="97"/>
    </location>
</feature>
<sequence>MKIRPLHDRVIVKRKEVESKSAGGIVLTGTAAGKSTRGEVLAVGNGRILDNGEIKPLDVKVGDVVIFNDGYGVKAEKIDNEEVLIMSESDILAIVEA</sequence>
<dbReference type="EMBL" id="BX936398">
    <property type="protein sequence ID" value="CAH19644.1"/>
    <property type="molecule type" value="Genomic_DNA"/>
</dbReference>
<dbReference type="RefSeq" id="WP_002209127.1">
    <property type="nucleotide sequence ID" value="NZ_CP009712.1"/>
</dbReference>
<dbReference type="SMR" id="Q66FD6"/>
<dbReference type="KEGG" id="ypo:BZ17_2165"/>
<dbReference type="KEGG" id="yps:YPTB0404"/>
<dbReference type="PATRIC" id="fig|273123.14.peg.2291"/>
<dbReference type="Proteomes" id="UP000001011">
    <property type="component" value="Chromosome"/>
</dbReference>
<dbReference type="GO" id="GO:0005737">
    <property type="term" value="C:cytoplasm"/>
    <property type="evidence" value="ECO:0007669"/>
    <property type="project" value="UniProtKB-SubCell"/>
</dbReference>
<dbReference type="GO" id="GO:0005524">
    <property type="term" value="F:ATP binding"/>
    <property type="evidence" value="ECO:0007669"/>
    <property type="project" value="InterPro"/>
</dbReference>
<dbReference type="GO" id="GO:0046872">
    <property type="term" value="F:metal ion binding"/>
    <property type="evidence" value="ECO:0007669"/>
    <property type="project" value="TreeGrafter"/>
</dbReference>
<dbReference type="GO" id="GO:0044183">
    <property type="term" value="F:protein folding chaperone"/>
    <property type="evidence" value="ECO:0007669"/>
    <property type="project" value="InterPro"/>
</dbReference>
<dbReference type="GO" id="GO:0051087">
    <property type="term" value="F:protein-folding chaperone binding"/>
    <property type="evidence" value="ECO:0007669"/>
    <property type="project" value="TreeGrafter"/>
</dbReference>
<dbReference type="GO" id="GO:0051082">
    <property type="term" value="F:unfolded protein binding"/>
    <property type="evidence" value="ECO:0007669"/>
    <property type="project" value="TreeGrafter"/>
</dbReference>
<dbReference type="GO" id="GO:0051085">
    <property type="term" value="P:chaperone cofactor-dependent protein refolding"/>
    <property type="evidence" value="ECO:0007669"/>
    <property type="project" value="TreeGrafter"/>
</dbReference>
<dbReference type="CDD" id="cd00320">
    <property type="entry name" value="cpn10"/>
    <property type="match status" value="1"/>
</dbReference>
<dbReference type="FunFam" id="2.30.33.40:FF:000001">
    <property type="entry name" value="10 kDa chaperonin"/>
    <property type="match status" value="1"/>
</dbReference>
<dbReference type="Gene3D" id="2.30.33.40">
    <property type="entry name" value="GroES chaperonin"/>
    <property type="match status" value="1"/>
</dbReference>
<dbReference type="HAMAP" id="MF_00580">
    <property type="entry name" value="CH10"/>
    <property type="match status" value="1"/>
</dbReference>
<dbReference type="InterPro" id="IPR020818">
    <property type="entry name" value="Chaperonin_GroES"/>
</dbReference>
<dbReference type="InterPro" id="IPR037124">
    <property type="entry name" value="Chaperonin_GroES_sf"/>
</dbReference>
<dbReference type="InterPro" id="IPR018369">
    <property type="entry name" value="Chaprnonin_Cpn10_CS"/>
</dbReference>
<dbReference type="InterPro" id="IPR011032">
    <property type="entry name" value="GroES-like_sf"/>
</dbReference>
<dbReference type="NCBIfam" id="NF001526">
    <property type="entry name" value="PRK00364.1-1"/>
    <property type="match status" value="1"/>
</dbReference>
<dbReference type="NCBIfam" id="NF001527">
    <property type="entry name" value="PRK00364.1-2"/>
    <property type="match status" value="1"/>
</dbReference>
<dbReference type="NCBIfam" id="NF001531">
    <property type="entry name" value="PRK00364.2-2"/>
    <property type="match status" value="1"/>
</dbReference>
<dbReference type="PANTHER" id="PTHR10772">
    <property type="entry name" value="10 KDA HEAT SHOCK PROTEIN"/>
    <property type="match status" value="1"/>
</dbReference>
<dbReference type="PANTHER" id="PTHR10772:SF58">
    <property type="entry name" value="CO-CHAPERONIN GROES"/>
    <property type="match status" value="1"/>
</dbReference>
<dbReference type="Pfam" id="PF00166">
    <property type="entry name" value="Cpn10"/>
    <property type="match status" value="1"/>
</dbReference>
<dbReference type="PRINTS" id="PR00297">
    <property type="entry name" value="CHAPERONIN10"/>
</dbReference>
<dbReference type="SMART" id="SM00883">
    <property type="entry name" value="Cpn10"/>
    <property type="match status" value="1"/>
</dbReference>
<dbReference type="SUPFAM" id="SSF50129">
    <property type="entry name" value="GroES-like"/>
    <property type="match status" value="1"/>
</dbReference>
<dbReference type="PROSITE" id="PS00681">
    <property type="entry name" value="CHAPERONINS_CPN10"/>
    <property type="match status" value="1"/>
</dbReference>
<organism>
    <name type="scientific">Yersinia pseudotuberculosis serotype I (strain IP32953)</name>
    <dbReference type="NCBI Taxonomy" id="273123"/>
    <lineage>
        <taxon>Bacteria</taxon>
        <taxon>Pseudomonadati</taxon>
        <taxon>Pseudomonadota</taxon>
        <taxon>Gammaproteobacteria</taxon>
        <taxon>Enterobacterales</taxon>
        <taxon>Yersiniaceae</taxon>
        <taxon>Yersinia</taxon>
    </lineage>
</organism>
<evidence type="ECO:0000255" key="1">
    <source>
        <dbReference type="HAMAP-Rule" id="MF_00580"/>
    </source>
</evidence>
<comment type="function">
    <text evidence="1">Together with the chaperonin GroEL, plays an essential role in assisting protein folding. The GroEL-GroES system forms a nano-cage that allows encapsulation of the non-native substrate proteins and provides a physical environment optimized to promote and accelerate protein folding. GroES binds to the apical surface of the GroEL ring, thereby capping the opening of the GroEL channel.</text>
</comment>
<comment type="subunit">
    <text evidence="1">Heptamer of 7 subunits arranged in a ring. Interacts with the chaperonin GroEL.</text>
</comment>
<comment type="subcellular location">
    <subcellularLocation>
        <location evidence="1">Cytoplasm</location>
    </subcellularLocation>
</comment>
<comment type="similarity">
    <text evidence="1">Belongs to the GroES chaperonin family.</text>
</comment>
<reference key="1">
    <citation type="journal article" date="2004" name="Proc. Natl. Acad. Sci. U.S.A.">
        <title>Insights into the evolution of Yersinia pestis through whole-genome comparison with Yersinia pseudotuberculosis.</title>
        <authorList>
            <person name="Chain P.S.G."/>
            <person name="Carniel E."/>
            <person name="Larimer F.W."/>
            <person name="Lamerdin J."/>
            <person name="Stoutland P.O."/>
            <person name="Regala W.M."/>
            <person name="Georgescu A.M."/>
            <person name="Vergez L.M."/>
            <person name="Land M.L."/>
            <person name="Motin V.L."/>
            <person name="Brubaker R.R."/>
            <person name="Fowler J."/>
            <person name="Hinnebusch J."/>
            <person name="Marceau M."/>
            <person name="Medigue C."/>
            <person name="Simonet M."/>
            <person name="Chenal-Francisque V."/>
            <person name="Souza B."/>
            <person name="Dacheux D."/>
            <person name="Elliott J.M."/>
            <person name="Derbise A."/>
            <person name="Hauser L.J."/>
            <person name="Garcia E."/>
        </authorList>
    </citation>
    <scope>NUCLEOTIDE SEQUENCE [LARGE SCALE GENOMIC DNA]</scope>
    <source>
        <strain>IP32953</strain>
    </source>
</reference>
<proteinExistence type="inferred from homology"/>
<gene>
    <name evidence="1" type="primary">groES</name>
    <name evidence="1" type="synonym">groS</name>
    <name type="ordered locus">YPTB0404</name>
</gene>
<protein>
    <recommendedName>
        <fullName evidence="1">Co-chaperonin GroES</fullName>
    </recommendedName>
    <alternativeName>
        <fullName evidence="1">10 kDa chaperonin</fullName>
    </alternativeName>
    <alternativeName>
        <fullName evidence="1">Chaperonin-10</fullName>
        <shortName evidence="1">Cpn10</shortName>
    </alternativeName>
</protein>
<keyword id="KW-0143">Chaperone</keyword>
<keyword id="KW-0963">Cytoplasm</keyword>
<accession>Q66FD6</accession>
<name>CH10_YERPS</name>